<reference key="1">
    <citation type="journal article" date="2004" name="Genome Res.">
        <title>The status, quality, and expansion of the NIH full-length cDNA project: the Mammalian Gene Collection (MGC).</title>
        <authorList>
            <consortium name="The MGC Project Team"/>
        </authorList>
    </citation>
    <scope>NUCLEOTIDE SEQUENCE [LARGE SCALE MRNA]</scope>
    <source>
        <tissue>Testis</tissue>
    </source>
</reference>
<feature type="chain" id="PRO_0000332299" description="Actin-like protein 9">
    <location>
        <begin position="1"/>
        <end position="411"/>
    </location>
</feature>
<feature type="region of interest" description="Disordered" evidence="2">
    <location>
        <begin position="1"/>
        <end position="23"/>
    </location>
</feature>
<feature type="compositionally biased region" description="Basic and acidic residues" evidence="2">
    <location>
        <begin position="1"/>
        <end position="15"/>
    </location>
</feature>
<gene>
    <name type="primary">Actl9</name>
    <name type="synonym">Actl7c</name>
</gene>
<sequence length="411" mass="46102">MDVNGPKRWEPHRSLDLNPRSTPVYKSPLQEPCGVFGNKGTTKMSGVVIDMGTGICKMGFAGQTRPTYIVRNIVGCQPKRRTTMEQPKMEMFIGEAAHARPELTLMHPVRNGIVVDWEAAEFIWRHILENDLRLDTQDHPLLFTDPPFNPASNREKLVEVAFESLHSPAIYVASQSVLSVYANGRVNGLVVDTGHGVSYTVPVFQGYNLPSGIQRMDLAGHYLTKFLAEKILRSSFAVKKEDMDTMENIKQQYCYVALDFQKEQGRPDEKFRRCLKLPDGQMITVGKELFQCPELLFHPPDTSGPSSLGLPSMVEHSLSTVPQELRADMEQNVLLCGGSSLFTGFEGRFKTELLRRLGPEAHVVVVAQANRNLSVWIGGSILASLCAFQTRWVLREQYEEHGPDIVLRKCS</sequence>
<proteinExistence type="evidence at transcript level"/>
<protein>
    <recommendedName>
        <fullName>Actin-like protein 9</fullName>
    </recommendedName>
</protein>
<evidence type="ECO:0000250" key="1">
    <source>
        <dbReference type="UniProtKB" id="Q8TC94"/>
    </source>
</evidence>
<evidence type="ECO:0000256" key="2">
    <source>
        <dbReference type="SAM" id="MobiDB-lite"/>
    </source>
</evidence>
<evidence type="ECO:0000305" key="3"/>
<comment type="function">
    <text evidence="1">Testis-specic protein that plays an important role in fusion of proacrosomal vesicles and perinuclear theca formation.</text>
</comment>
<comment type="subunit">
    <text evidence="1">Interacts with ACTL7A.</text>
</comment>
<comment type="subcellular location">
    <subcellularLocation>
        <location evidence="1">Cytoplasmic vesicle</location>
        <location evidence="1">Secretory vesicle</location>
        <location evidence="1">Acrosome</location>
    </subcellularLocation>
    <subcellularLocation>
        <location evidence="1">Cytoplasm</location>
        <location evidence="1">Cytoskeleton</location>
        <location evidence="1">Perinuclear theca</location>
    </subcellularLocation>
    <text evidence="1">Localizes predominantly in the equatorial segment of the sperm head and neck regions, with some localization in the acrosomal segment of the head. Colocalizes in the acrosomal and equatorial segments of sperm with ACTL7A. Colocalizes with PLCZ1 in the equatorial segment of the head of capacitated sperm.</text>
</comment>
<comment type="similarity">
    <text evidence="3">Belongs to the actin family.</text>
</comment>
<organism>
    <name type="scientific">Rattus norvegicus</name>
    <name type="common">Rat</name>
    <dbReference type="NCBI Taxonomy" id="10116"/>
    <lineage>
        <taxon>Eukaryota</taxon>
        <taxon>Metazoa</taxon>
        <taxon>Chordata</taxon>
        <taxon>Craniata</taxon>
        <taxon>Vertebrata</taxon>
        <taxon>Euteleostomi</taxon>
        <taxon>Mammalia</taxon>
        <taxon>Eutheria</taxon>
        <taxon>Euarchontoglires</taxon>
        <taxon>Glires</taxon>
        <taxon>Rodentia</taxon>
        <taxon>Myomorpha</taxon>
        <taxon>Muroidea</taxon>
        <taxon>Muridae</taxon>
        <taxon>Murinae</taxon>
        <taxon>Rattus</taxon>
    </lineage>
</organism>
<keyword id="KW-0963">Cytoplasm</keyword>
<keyword id="KW-0968">Cytoplasmic vesicle</keyword>
<keyword id="KW-0206">Cytoskeleton</keyword>
<keyword id="KW-0278">Fertilization</keyword>
<keyword id="KW-1185">Reference proteome</keyword>
<dbReference type="EMBL" id="BC079230">
    <property type="protein sequence ID" value="AAH79230.1"/>
    <property type="molecule type" value="mRNA"/>
</dbReference>
<dbReference type="RefSeq" id="NP_001013915.1">
    <property type="nucleotide sequence ID" value="NM_001013893.1"/>
</dbReference>
<dbReference type="SMR" id="Q6AY16"/>
<dbReference type="FunCoup" id="Q6AY16">
    <property type="interactions" value="13"/>
</dbReference>
<dbReference type="STRING" id="10116.ENSRNOP00000037574"/>
<dbReference type="iPTMnet" id="Q6AY16"/>
<dbReference type="PhosphoSitePlus" id="Q6AY16"/>
<dbReference type="PaxDb" id="10116-ENSRNOP00000037574"/>
<dbReference type="Ensembl" id="ENSRNOT00000031286.5">
    <property type="protein sequence ID" value="ENSRNOP00000037574.2"/>
    <property type="gene ID" value="ENSRNOG00000026033.5"/>
</dbReference>
<dbReference type="GeneID" id="292516"/>
<dbReference type="KEGG" id="rno:292516"/>
<dbReference type="UCSC" id="RGD:1359476">
    <property type="organism name" value="rat"/>
</dbReference>
<dbReference type="AGR" id="RGD:1359476"/>
<dbReference type="CTD" id="292516"/>
<dbReference type="RGD" id="1359476">
    <property type="gene designation" value="LOC292516"/>
</dbReference>
<dbReference type="eggNOG" id="KOG0676">
    <property type="taxonomic scope" value="Eukaryota"/>
</dbReference>
<dbReference type="GeneTree" id="ENSGT00940000163012"/>
<dbReference type="HOGENOM" id="CLU_027965_0_2_1"/>
<dbReference type="InParanoid" id="Q6AY16"/>
<dbReference type="OMA" id="AHICPEL"/>
<dbReference type="OrthoDB" id="41344at9989"/>
<dbReference type="PhylomeDB" id="Q6AY16"/>
<dbReference type="TreeFam" id="TF354237"/>
<dbReference type="PRO" id="PR:Q6AY16"/>
<dbReference type="Proteomes" id="UP000002494">
    <property type="component" value="Chromosome 1"/>
</dbReference>
<dbReference type="Bgee" id="ENSRNOG00000026033">
    <property type="expression patterns" value="Expressed in testis"/>
</dbReference>
<dbReference type="GO" id="GO:0001669">
    <property type="term" value="C:acrosomal vesicle"/>
    <property type="evidence" value="ECO:0000250"/>
    <property type="project" value="UniProtKB"/>
</dbReference>
<dbReference type="GO" id="GO:0015629">
    <property type="term" value="C:actin cytoskeleton"/>
    <property type="evidence" value="ECO:0000318"/>
    <property type="project" value="GO_Central"/>
</dbReference>
<dbReference type="GO" id="GO:0033011">
    <property type="term" value="C:perinuclear theca"/>
    <property type="evidence" value="ECO:0000250"/>
    <property type="project" value="UniProtKB"/>
</dbReference>
<dbReference type="GO" id="GO:0061827">
    <property type="term" value="C:sperm head"/>
    <property type="evidence" value="ECO:0000250"/>
    <property type="project" value="UniProtKB"/>
</dbReference>
<dbReference type="GO" id="GO:0001675">
    <property type="term" value="P:acrosome assembly"/>
    <property type="evidence" value="ECO:0000250"/>
    <property type="project" value="UniProtKB"/>
</dbReference>
<dbReference type="GO" id="GO:0009566">
    <property type="term" value="P:fertilization"/>
    <property type="evidence" value="ECO:0000250"/>
    <property type="project" value="UniProtKB"/>
</dbReference>
<dbReference type="GO" id="GO:0007338">
    <property type="term" value="P:single fertilization"/>
    <property type="evidence" value="ECO:0007669"/>
    <property type="project" value="UniProtKB-KW"/>
</dbReference>
<dbReference type="FunFam" id="3.30.420.40:FF:000050">
    <property type="entry name" value="Actin, alpha skeletal muscle"/>
    <property type="match status" value="1"/>
</dbReference>
<dbReference type="Gene3D" id="3.30.420.40">
    <property type="match status" value="2"/>
</dbReference>
<dbReference type="Gene3D" id="3.90.640.10">
    <property type="entry name" value="Actin, Chain A, domain 4"/>
    <property type="match status" value="1"/>
</dbReference>
<dbReference type="InterPro" id="IPR004000">
    <property type="entry name" value="Actin"/>
</dbReference>
<dbReference type="InterPro" id="IPR043129">
    <property type="entry name" value="ATPase_NBD"/>
</dbReference>
<dbReference type="PANTHER" id="PTHR11937">
    <property type="entry name" value="ACTIN"/>
    <property type="match status" value="1"/>
</dbReference>
<dbReference type="Pfam" id="PF00022">
    <property type="entry name" value="Actin"/>
    <property type="match status" value="1"/>
</dbReference>
<dbReference type="PRINTS" id="PR00190">
    <property type="entry name" value="ACTIN"/>
</dbReference>
<dbReference type="SMART" id="SM00268">
    <property type="entry name" value="ACTIN"/>
    <property type="match status" value="1"/>
</dbReference>
<dbReference type="SUPFAM" id="SSF53067">
    <property type="entry name" value="Actin-like ATPase domain"/>
    <property type="match status" value="2"/>
</dbReference>
<accession>Q6AY16</accession>
<name>ACTL9_RAT</name>